<keyword id="KW-0238">DNA-binding</keyword>
<keyword id="KW-0255">Endonuclease</keyword>
<keyword id="KW-0269">Exonuclease</keyword>
<keyword id="KW-0378">Hydrolase</keyword>
<keyword id="KW-0479">Metal-binding</keyword>
<keyword id="KW-0540">Nuclease</keyword>
<keyword id="KW-1185">Reference proteome</keyword>
<keyword id="KW-0694">RNA-binding</keyword>
<keyword id="KW-0804">Transcription</keyword>
<keyword id="KW-0805">Transcription regulation</keyword>
<keyword id="KW-0806">Transcription termination</keyword>
<keyword id="KW-0862">Zinc</keyword>
<dbReference type="EC" id="3.1.-.-" evidence="3"/>
<dbReference type="EMBL" id="L77117">
    <property type="protein sequence ID" value="AAB99240.1"/>
    <property type="molecule type" value="Genomic_DNA"/>
</dbReference>
<dbReference type="PIR" id="C64454">
    <property type="entry name" value="C64454"/>
</dbReference>
<dbReference type="RefSeq" id="WP_010870748.1">
    <property type="nucleotide sequence ID" value="NC_000909.1"/>
</dbReference>
<dbReference type="SMR" id="Q58633"/>
<dbReference type="FunCoup" id="Q58633">
    <property type="interactions" value="138"/>
</dbReference>
<dbReference type="STRING" id="243232.MJ_1236"/>
<dbReference type="PaxDb" id="243232-MJ_1236"/>
<dbReference type="EnsemblBacteria" id="AAB99240">
    <property type="protein sequence ID" value="AAB99240"/>
    <property type="gene ID" value="MJ_1236"/>
</dbReference>
<dbReference type="GeneID" id="1452132"/>
<dbReference type="KEGG" id="mja:MJ_1236"/>
<dbReference type="eggNOG" id="arCOG00543">
    <property type="taxonomic scope" value="Archaea"/>
</dbReference>
<dbReference type="HOGENOM" id="CLU_009673_5_1_2"/>
<dbReference type="InParanoid" id="Q58633"/>
<dbReference type="OrthoDB" id="7155at2157"/>
<dbReference type="PhylomeDB" id="Q58633"/>
<dbReference type="Proteomes" id="UP000000805">
    <property type="component" value="Chromosome"/>
</dbReference>
<dbReference type="GO" id="GO:0003677">
    <property type="term" value="F:DNA binding"/>
    <property type="evidence" value="ECO:0007669"/>
    <property type="project" value="UniProtKB-KW"/>
</dbReference>
<dbReference type="GO" id="GO:0004527">
    <property type="term" value="F:exonuclease activity"/>
    <property type="evidence" value="ECO:0007669"/>
    <property type="project" value="UniProtKB-KW"/>
</dbReference>
<dbReference type="GO" id="GO:0046872">
    <property type="term" value="F:metal ion binding"/>
    <property type="evidence" value="ECO:0007669"/>
    <property type="project" value="UniProtKB-KW"/>
</dbReference>
<dbReference type="GO" id="GO:0003723">
    <property type="term" value="F:RNA binding"/>
    <property type="evidence" value="ECO:0007669"/>
    <property type="project" value="UniProtKB-KW"/>
</dbReference>
<dbReference type="GO" id="GO:0004521">
    <property type="term" value="F:RNA endonuclease activity"/>
    <property type="evidence" value="ECO:0000314"/>
    <property type="project" value="UniProtKB"/>
</dbReference>
<dbReference type="GO" id="GO:0006353">
    <property type="term" value="P:DNA-templated transcription termination"/>
    <property type="evidence" value="ECO:0007669"/>
    <property type="project" value="UniProtKB-KW"/>
</dbReference>
<dbReference type="CDD" id="cd22532">
    <property type="entry name" value="KH-II_CPSF_arch_rpt1"/>
    <property type="match status" value="1"/>
</dbReference>
<dbReference type="CDD" id="cd02410">
    <property type="entry name" value="KH-II_CPSF_arch_rpt2"/>
    <property type="match status" value="1"/>
</dbReference>
<dbReference type="CDD" id="cd16295">
    <property type="entry name" value="TTHA0252-CPSF-like_MBL-fold"/>
    <property type="match status" value="1"/>
</dbReference>
<dbReference type="Gene3D" id="3.30.300.20">
    <property type="match status" value="1"/>
</dbReference>
<dbReference type="Gene3D" id="3.30.300.230">
    <property type="match status" value="1"/>
</dbReference>
<dbReference type="Gene3D" id="3.40.50.10890">
    <property type="match status" value="1"/>
</dbReference>
<dbReference type="Gene3D" id="3.60.15.10">
    <property type="entry name" value="Ribonuclease Z/Hydroxyacylglutathione hydrolase-like"/>
    <property type="match status" value="1"/>
</dbReference>
<dbReference type="HAMAP" id="MF_00870">
    <property type="entry name" value="FttA"/>
    <property type="match status" value="1"/>
</dbReference>
<dbReference type="InterPro" id="IPR019975">
    <property type="entry name" value="aCPSF1"/>
</dbReference>
<dbReference type="InterPro" id="IPR022712">
    <property type="entry name" value="Beta_Casp"/>
</dbReference>
<dbReference type="InterPro" id="IPR004087">
    <property type="entry name" value="KH_dom"/>
</dbReference>
<dbReference type="InterPro" id="IPR015946">
    <property type="entry name" value="KH_dom-like_a/b"/>
</dbReference>
<dbReference type="InterPro" id="IPR004044">
    <property type="entry name" value="KH_dom_type_2"/>
</dbReference>
<dbReference type="InterPro" id="IPR050698">
    <property type="entry name" value="MBL"/>
</dbReference>
<dbReference type="InterPro" id="IPR001279">
    <property type="entry name" value="Metallo-B-lactamas"/>
</dbReference>
<dbReference type="InterPro" id="IPR036866">
    <property type="entry name" value="RibonucZ/Hydroxyglut_hydro"/>
</dbReference>
<dbReference type="InterPro" id="IPR011108">
    <property type="entry name" value="RMMBL"/>
</dbReference>
<dbReference type="InterPro" id="IPR033769">
    <property type="entry name" value="TffA_KH"/>
</dbReference>
<dbReference type="NCBIfam" id="TIGR03675">
    <property type="entry name" value="arCOG00543"/>
    <property type="match status" value="1"/>
</dbReference>
<dbReference type="PANTHER" id="PTHR11203:SF51">
    <property type="entry name" value="CLEAVAGE AND POLYADENYLATION SPECIFICITY FACTOR"/>
    <property type="match status" value="1"/>
</dbReference>
<dbReference type="PANTHER" id="PTHR11203">
    <property type="entry name" value="CLEAVAGE AND POLYADENYLATION SPECIFICITY FACTOR FAMILY MEMBER"/>
    <property type="match status" value="1"/>
</dbReference>
<dbReference type="Pfam" id="PF10996">
    <property type="entry name" value="Beta-Casp"/>
    <property type="match status" value="1"/>
</dbReference>
<dbReference type="Pfam" id="PF07650">
    <property type="entry name" value="KH_2"/>
    <property type="match status" value="1"/>
</dbReference>
<dbReference type="Pfam" id="PF17214">
    <property type="entry name" value="KH_TffA"/>
    <property type="match status" value="1"/>
</dbReference>
<dbReference type="Pfam" id="PF00753">
    <property type="entry name" value="Lactamase_B"/>
    <property type="match status" value="1"/>
</dbReference>
<dbReference type="Pfam" id="PF07521">
    <property type="entry name" value="RMMBL"/>
    <property type="match status" value="1"/>
</dbReference>
<dbReference type="SMART" id="SM01027">
    <property type="entry name" value="Beta-Casp"/>
    <property type="match status" value="1"/>
</dbReference>
<dbReference type="SMART" id="SM00322">
    <property type="entry name" value="KH"/>
    <property type="match status" value="1"/>
</dbReference>
<dbReference type="SMART" id="SM00849">
    <property type="entry name" value="Lactamase_B"/>
    <property type="match status" value="1"/>
</dbReference>
<dbReference type="SUPFAM" id="SSF56281">
    <property type="entry name" value="Metallo-hydrolase/oxidoreductase"/>
    <property type="match status" value="1"/>
</dbReference>
<sequence>MSAEEVLENIRKEIIKKSPKEAKIVDVQFEGPEVVVYVKNPEIFTNEIIKSLAKDLRKRISIRPDPSVLVEPEIAKQKILEIVPEEAEITNFVFDANTGEVIIESKKPGLVIGKEGKTLEMIKKAIRWAPKPVRTPPIQSETIKAIRATLYRERHEVKEILRRIGRRIHRDIVVRGDYWIRVSFLGGAREVGRSCLYVQTPDTRVLIDCGINVACEDKAFPHFDAPEFSIEDLDAVIVTHAHLDHCGFIPGLFRYGYDGPVYCTRPTRDLMTLLQKDYLEIAKKEGKEVPYTSKDIKTCVKHTIPIDYGVTTDISPTIKLTLHNAGHVLGSAIAHLHIGEGLYNLAYTGDIKFETSRLLEPAVCQFPRLETLIIESTYGAYDDVLPEREEAERELLRVVSETTDRGGKVLIPVFGVGRAQELMLVLEEGYNQGIFNAPVYLDGMIWEATAIHTAYPEYLSKEMRQKIFHEGDNPFLSEVFKRVGSTNERRKVIDSDEPCVILATSGMLTGGPSVEYLKHLAPDEKNAIIFVGYQAEGTLGRKVQSGWKEIPIITRNGKTKSIPINLQVYTIEGFSGHSDRKQLIKYIRRLKPSPEKIIMVHGEESKCLDFADTVRRLFKKQTYVPMNLDAIRVK</sequence>
<comment type="function">
    <text evidence="3">Terminates transcription on the whole genome. Termination is linked to FttA-mediated RNA cleavage and does not require NTP hydrolysis. Cleaves endonucleolytically at the RNA exit channel of RNA polymerase (RNAP); the 5'-3' exonuclease activity of this protein degrades the nascent RNA released from RNAP.</text>
</comment>
<comment type="function">
    <text evidence="4">An endoribonuclease with no apparent exonuclease activity, has low activity on single-stranded DNA (endodeoxyribonuclease, endoDNase) (PubMed:21955587).</text>
</comment>
<comment type="cofactor">
    <cofactor evidence="2 3">
        <name>Zn(2+)</name>
        <dbReference type="ChEBI" id="CHEBI:29105"/>
    </cofactor>
    <text evidence="3">Binds 2 Zn(2+) ions, which are required for nuclease activity.</text>
</comment>
<comment type="activity regulation">
    <text evidence="4">Optimal NaCl concentration is 100 mM for nuclease activity on RNA (PubMed:21955587).</text>
</comment>
<comment type="biophysicochemical properties">
    <temperatureDependence>
        <text evidence="4">Optimum temperature is 60 degrees Celsius for nuclease activity on RNA (PubMed:21955587).</text>
    </temperatureDependence>
</comment>
<comment type="subunit">
    <text evidence="3 6">Homodimer (PubMed:21955587). Interacts with RNA polymerase (RNAP), interacts with the Spt4-Spt5 complex (By similarity).</text>
</comment>
<comment type="similarity">
    <text evidence="3">Belongs to the metallo-beta-lactamase superfamily. RNA-metabolizing metallo-beta-lactamase-like family. FttA subfamily.</text>
</comment>
<protein>
    <recommendedName>
        <fullName evidence="3">Transcription termination factor FttA</fullName>
        <ecNumber evidence="3">3.1.-.-</ecNumber>
    </recommendedName>
    <alternativeName>
        <fullName evidence="5">RNase J2</fullName>
    </alternativeName>
</protein>
<organism>
    <name type="scientific">Methanocaldococcus jannaschii (strain ATCC 43067 / DSM 2661 / JAL-1 / JCM 10045 / NBRC 100440)</name>
    <name type="common">Methanococcus jannaschii</name>
    <dbReference type="NCBI Taxonomy" id="243232"/>
    <lineage>
        <taxon>Archaea</taxon>
        <taxon>Methanobacteriati</taxon>
        <taxon>Methanobacteriota</taxon>
        <taxon>Methanomada group</taxon>
        <taxon>Methanococci</taxon>
        <taxon>Methanococcales</taxon>
        <taxon>Methanocaldococcaceae</taxon>
        <taxon>Methanocaldococcus</taxon>
    </lineage>
</organism>
<reference key="1">
    <citation type="journal article" date="1996" name="Science">
        <title>Complete genome sequence of the methanogenic archaeon, Methanococcus jannaschii.</title>
        <authorList>
            <person name="Bult C.J."/>
            <person name="White O."/>
            <person name="Olsen G.J."/>
            <person name="Zhou L."/>
            <person name="Fleischmann R.D."/>
            <person name="Sutton G.G."/>
            <person name="Blake J.A."/>
            <person name="FitzGerald L.M."/>
            <person name="Clayton R.A."/>
            <person name="Gocayne J.D."/>
            <person name="Kerlavage A.R."/>
            <person name="Dougherty B.A."/>
            <person name="Tomb J.-F."/>
            <person name="Adams M.D."/>
            <person name="Reich C.I."/>
            <person name="Overbeek R."/>
            <person name="Kirkness E.F."/>
            <person name="Weinstock K.G."/>
            <person name="Merrick J.M."/>
            <person name="Glodek A."/>
            <person name="Scott J.L."/>
            <person name="Geoghagen N.S.M."/>
            <person name="Weidman J.F."/>
            <person name="Fuhrmann J.L."/>
            <person name="Nguyen D."/>
            <person name="Utterback T.R."/>
            <person name="Kelley J.M."/>
            <person name="Peterson J.D."/>
            <person name="Sadow P.W."/>
            <person name="Hanna M.C."/>
            <person name="Cotton M.D."/>
            <person name="Roberts K.M."/>
            <person name="Hurst M.A."/>
            <person name="Kaine B.P."/>
            <person name="Borodovsky M."/>
            <person name="Klenk H.-P."/>
            <person name="Fraser C.M."/>
            <person name="Smith H.O."/>
            <person name="Woese C.R."/>
            <person name="Venter J.C."/>
        </authorList>
    </citation>
    <scope>NUCLEOTIDE SEQUENCE [LARGE SCALE GENOMIC DNA]</scope>
    <source>
        <strain>ATCC 43067 / DSM 2661 / JAL-1 / JCM 10045 / NBRC 100440</strain>
    </source>
</reference>
<reference key="2">
    <citation type="journal article" date="2011" name="RNA Biol.">
        <title>Distinct activities of several RNase J proteins in methanogenic archaea.</title>
        <authorList>
            <person name="Levy S."/>
            <person name="Portnoy V."/>
            <person name="Admon J."/>
            <person name="Schuster G."/>
        </authorList>
    </citation>
    <scope>FUNCTION AS AN ENDORIBONUCLEASE</scope>
    <scope>ACTIVITY REGULATION</scope>
    <scope>BIOPHYSICOCHEMICAL PROPERTIES</scope>
    <scope>POSSIBLE SUBUNIT</scope>
    <scope>MUTAGENESIS OF 242-HIS--HIS-245</scope>
    <source>
        <strain>ATCC 43067 / DSM 2661 / JAL-1 / JCM 10045 / NBRC 100440</strain>
    </source>
</reference>
<gene>
    <name evidence="3" type="primary">fttA</name>
    <name type="ordered locus">MJ1236</name>
</gene>
<evidence type="ECO:0000250" key="1">
    <source>
        <dbReference type="UniProtKB" id="O27271"/>
    </source>
</evidence>
<evidence type="ECO:0000250" key="2">
    <source>
        <dbReference type="UniProtKB" id="Q58271"/>
    </source>
</evidence>
<evidence type="ECO:0000255" key="3">
    <source>
        <dbReference type="HAMAP-Rule" id="MF_00870"/>
    </source>
</evidence>
<evidence type="ECO:0000269" key="4">
    <source>
    </source>
</evidence>
<evidence type="ECO:0000303" key="5">
    <source>
    </source>
</evidence>
<evidence type="ECO:0000305" key="6">
    <source>
    </source>
</evidence>
<feature type="chain" id="PRO_0000107231" description="Transcription termination factor FttA">
    <location>
        <begin position="1"/>
        <end position="634"/>
    </location>
</feature>
<feature type="region of interest" description="KHa" evidence="3">
    <location>
        <begin position="4"/>
        <end position="69"/>
    </location>
</feature>
<feature type="region of interest" description="KHb" evidence="3">
    <location>
        <begin position="70"/>
        <end position="137"/>
    </location>
</feature>
<feature type="region of interest" description="Metallo-beta-lactamase N-terminus" evidence="3">
    <location>
        <begin position="179"/>
        <end position="381"/>
    </location>
</feature>
<feature type="region of interest" description="Beta-Casp" evidence="3">
    <location>
        <begin position="382"/>
        <end position="575"/>
    </location>
</feature>
<feature type="region of interest" description="Metallo-beta-lactamase C-terminus" evidence="3">
    <location>
        <begin position="576"/>
        <end position="634"/>
    </location>
</feature>
<feature type="binding site" evidence="1 3">
    <location>
        <position position="240"/>
    </location>
    <ligand>
        <name>Zn(2+)</name>
        <dbReference type="ChEBI" id="CHEBI:29105"/>
        <label>1</label>
    </ligand>
</feature>
<feature type="binding site" evidence="1 3">
    <location>
        <position position="242"/>
    </location>
    <ligand>
        <name>Zn(2+)</name>
        <dbReference type="ChEBI" id="CHEBI:29105"/>
        <label>1</label>
    </ligand>
</feature>
<feature type="binding site" evidence="1 3">
    <location>
        <position position="244"/>
    </location>
    <ligand>
        <name>Zn(2+)</name>
        <dbReference type="ChEBI" id="CHEBI:29105"/>
        <label>2</label>
    </ligand>
</feature>
<feature type="binding site" evidence="1 3">
    <location>
        <position position="245"/>
    </location>
    <ligand>
        <name>Zn(2+)</name>
        <dbReference type="ChEBI" id="CHEBI:29105"/>
        <label>2</label>
    </ligand>
</feature>
<feature type="binding site" evidence="1 3">
    <location>
        <position position="327"/>
    </location>
    <ligand>
        <name>Zn(2+)</name>
        <dbReference type="ChEBI" id="CHEBI:29105"/>
        <label>1</label>
    </ligand>
</feature>
<feature type="binding site" evidence="1 3">
    <location>
        <position position="350"/>
    </location>
    <ligand>
        <name>Zn(2+)</name>
        <dbReference type="ChEBI" id="CHEBI:29105"/>
        <label>1</label>
    </ligand>
</feature>
<feature type="binding site" evidence="1 3">
    <location>
        <position position="350"/>
    </location>
    <ligand>
        <name>Zn(2+)</name>
        <dbReference type="ChEBI" id="CHEBI:29105"/>
        <label>2</label>
    </ligand>
</feature>
<feature type="binding site" evidence="1 3">
    <location>
        <position position="601"/>
    </location>
    <ligand>
        <name>Zn(2+)</name>
        <dbReference type="ChEBI" id="CHEBI:29105"/>
        <label>2</label>
    </ligand>
</feature>
<feature type="mutagenesis site" description="Greatly decreased RNase activity." evidence="4">
    <original>HLDH</original>
    <variation>ALKA</variation>
    <location>
        <begin position="242"/>
        <end position="245"/>
    </location>
</feature>
<name>FTTA_METJA</name>
<accession>Q58633</accession>
<proteinExistence type="evidence at protein level"/>